<protein>
    <recommendedName>
        <fullName evidence="1">Choline transporter-like protein 4</fullName>
    </recommendedName>
    <alternativeName>
        <fullName evidence="1">Solute carrier family 44 member 4</fullName>
    </alternativeName>
    <alternativeName>
        <fullName evidence="1">Thiamine pyrophosphate transporter 1</fullName>
    </alternativeName>
</protein>
<keyword id="KW-0050">Antiport</keyword>
<keyword id="KW-1003">Cell membrane</keyword>
<keyword id="KW-0325">Glycoprotein</keyword>
<keyword id="KW-0472">Membrane</keyword>
<keyword id="KW-1185">Reference proteome</keyword>
<keyword id="KW-0812">Transmembrane</keyword>
<keyword id="KW-1133">Transmembrane helix</keyword>
<keyword id="KW-0813">Transport</keyword>
<accession>A5PF08</accession>
<dbReference type="EMBL" id="AL773527">
    <property type="protein sequence ID" value="CAN87705.1"/>
    <property type="molecule type" value="Genomic_DNA"/>
</dbReference>
<dbReference type="RefSeq" id="NP_001095288.1">
    <property type="nucleotide sequence ID" value="NM_001101818.1"/>
</dbReference>
<dbReference type="RefSeq" id="XP_005665856.1">
    <property type="nucleotide sequence ID" value="XM_005665799.3"/>
</dbReference>
<dbReference type="SMR" id="A5PF08"/>
<dbReference type="FunCoup" id="A5PF08">
    <property type="interactions" value="236"/>
</dbReference>
<dbReference type="STRING" id="9823.ENSSSCP00000074441"/>
<dbReference type="GlyCosmos" id="A5PF08">
    <property type="glycosylation" value="8 sites, No reported glycans"/>
</dbReference>
<dbReference type="GlyGen" id="A5PF08">
    <property type="glycosylation" value="8 sites"/>
</dbReference>
<dbReference type="PaxDb" id="9823-ENSSSCP00000001514"/>
<dbReference type="PeptideAtlas" id="A5PF08"/>
<dbReference type="Ensembl" id="ENSSSCT00000033364.3">
    <property type="protein sequence ID" value="ENSSSCP00000028905.1"/>
    <property type="gene ID" value="ENSSSCG00000001419.6"/>
</dbReference>
<dbReference type="Ensembl" id="ENSSSCT00025102862.1">
    <property type="protein sequence ID" value="ENSSSCP00025045556.1"/>
    <property type="gene ID" value="ENSSSCG00025074458.1"/>
</dbReference>
<dbReference type="Ensembl" id="ENSSSCT00030077922.1">
    <property type="protein sequence ID" value="ENSSSCP00030035599.1"/>
    <property type="gene ID" value="ENSSSCG00030055836.1"/>
</dbReference>
<dbReference type="Ensembl" id="ENSSSCT00040059607.1">
    <property type="protein sequence ID" value="ENSSSCP00040024992.1"/>
    <property type="gene ID" value="ENSSSCG00040043733.1"/>
</dbReference>
<dbReference type="Ensembl" id="ENSSSCT00045068724.1">
    <property type="protein sequence ID" value="ENSSSCP00045048929.1"/>
    <property type="gene ID" value="ENSSSCG00045039450.1"/>
</dbReference>
<dbReference type="Ensembl" id="ENSSSCT00060092064.1">
    <property type="protein sequence ID" value="ENSSSCP00060039781.1"/>
    <property type="gene ID" value="ENSSSCG00060066461.1"/>
</dbReference>
<dbReference type="Ensembl" id="ENSSSCT00065020489.1">
    <property type="protein sequence ID" value="ENSSSCP00065008309.1"/>
    <property type="gene ID" value="ENSSSCG00065015210.1"/>
</dbReference>
<dbReference type="Ensembl" id="ENSSSCT00070046745.1">
    <property type="protein sequence ID" value="ENSSSCP00070039431.1"/>
    <property type="gene ID" value="ENSSSCG00070023449.1"/>
</dbReference>
<dbReference type="Ensembl" id="ENSSSCT00090028384">
    <property type="protein sequence ID" value="ENSSSCP00090017456"/>
    <property type="gene ID" value="ENSSSCG00090016148"/>
</dbReference>
<dbReference type="Ensembl" id="ENSSSCT00105038471">
    <property type="protein sequence ID" value="ENSSSCP00105026708"/>
    <property type="gene ID" value="ENSSSCG00105020026"/>
</dbReference>
<dbReference type="Ensembl" id="ENSSSCT00115013267">
    <property type="protein sequence ID" value="ENSSSCP00115012537"/>
    <property type="gene ID" value="ENSSSCG00115007457"/>
</dbReference>
<dbReference type="GeneID" id="100124377"/>
<dbReference type="KEGG" id="ssc:100124377"/>
<dbReference type="CTD" id="80736"/>
<dbReference type="VGNC" id="VGNC:93120">
    <property type="gene designation" value="SLC44A4"/>
</dbReference>
<dbReference type="eggNOG" id="KOG1362">
    <property type="taxonomic scope" value="Eukaryota"/>
</dbReference>
<dbReference type="GeneTree" id="ENSGT00940000160576"/>
<dbReference type="HOGENOM" id="CLU_017181_3_1_1"/>
<dbReference type="InParanoid" id="A5PF08"/>
<dbReference type="OMA" id="SFCNSAY"/>
<dbReference type="OrthoDB" id="420519at2759"/>
<dbReference type="TreeFam" id="TF313325"/>
<dbReference type="Reactome" id="R-SSC-1483191">
    <property type="pathway name" value="Synthesis of PC"/>
</dbReference>
<dbReference type="Reactome" id="R-SSC-425366">
    <property type="pathway name" value="Transport of bile salts and organic acids, metal ions and amine compounds"/>
</dbReference>
<dbReference type="Proteomes" id="UP000008227">
    <property type="component" value="Chromosome 7"/>
</dbReference>
<dbReference type="Proteomes" id="UP000314985">
    <property type="component" value="Chromosome 7"/>
</dbReference>
<dbReference type="Proteomes" id="UP000694570">
    <property type="component" value="Unplaced"/>
</dbReference>
<dbReference type="Proteomes" id="UP000694571">
    <property type="component" value="Unplaced"/>
</dbReference>
<dbReference type="Proteomes" id="UP000694720">
    <property type="component" value="Unplaced"/>
</dbReference>
<dbReference type="Proteomes" id="UP000694722">
    <property type="component" value="Unplaced"/>
</dbReference>
<dbReference type="Proteomes" id="UP000694723">
    <property type="component" value="Unplaced"/>
</dbReference>
<dbReference type="Proteomes" id="UP000694724">
    <property type="component" value="Unplaced"/>
</dbReference>
<dbReference type="Proteomes" id="UP000694725">
    <property type="component" value="Unplaced"/>
</dbReference>
<dbReference type="Proteomes" id="UP000694726">
    <property type="component" value="Unplaced"/>
</dbReference>
<dbReference type="Proteomes" id="UP000694727">
    <property type="component" value="Unplaced"/>
</dbReference>
<dbReference type="Proteomes" id="UP000694728">
    <property type="component" value="Unplaced"/>
</dbReference>
<dbReference type="Bgee" id="ENSSSCG00000001419">
    <property type="expression patterns" value="Expressed in caecum and 25 other cell types or tissues"/>
</dbReference>
<dbReference type="ExpressionAtlas" id="A5PF08">
    <property type="expression patterns" value="baseline and differential"/>
</dbReference>
<dbReference type="GO" id="GO:0016324">
    <property type="term" value="C:apical plasma membrane"/>
    <property type="evidence" value="ECO:0000250"/>
    <property type="project" value="UniProtKB"/>
</dbReference>
<dbReference type="GO" id="GO:0005886">
    <property type="term" value="C:plasma membrane"/>
    <property type="evidence" value="ECO:0000318"/>
    <property type="project" value="GO_Central"/>
</dbReference>
<dbReference type="GO" id="GO:0015297">
    <property type="term" value="F:antiporter activity"/>
    <property type="evidence" value="ECO:0007669"/>
    <property type="project" value="UniProtKB-KW"/>
</dbReference>
<dbReference type="GO" id="GO:0015220">
    <property type="term" value="F:choline transmembrane transporter activity"/>
    <property type="evidence" value="ECO:0000250"/>
    <property type="project" value="UniProtKB"/>
</dbReference>
<dbReference type="GO" id="GO:0090422">
    <property type="term" value="F:thiamine pyrophosphate transmembrane transporter activity"/>
    <property type="evidence" value="ECO:0000250"/>
    <property type="project" value="UniProtKB"/>
</dbReference>
<dbReference type="GO" id="GO:0008292">
    <property type="term" value="P:acetylcholine biosynthetic process"/>
    <property type="evidence" value="ECO:0000250"/>
    <property type="project" value="UniProtKB"/>
</dbReference>
<dbReference type="GO" id="GO:0061526">
    <property type="term" value="P:acetylcholine secretion"/>
    <property type="evidence" value="ECO:0000250"/>
    <property type="project" value="UniProtKB"/>
</dbReference>
<dbReference type="GO" id="GO:0015871">
    <property type="term" value="P:choline transport"/>
    <property type="evidence" value="ECO:0000250"/>
    <property type="project" value="UniProtKB"/>
</dbReference>
<dbReference type="GO" id="GO:0035675">
    <property type="term" value="P:neuromast hair cell development"/>
    <property type="evidence" value="ECO:0000250"/>
    <property type="project" value="UniProtKB"/>
</dbReference>
<dbReference type="GO" id="GO:0032475">
    <property type="term" value="P:otolith formation"/>
    <property type="evidence" value="ECO:0000250"/>
    <property type="project" value="UniProtKB"/>
</dbReference>
<dbReference type="GO" id="GO:0030307">
    <property type="term" value="P:positive regulation of cell growth"/>
    <property type="evidence" value="ECO:0000250"/>
    <property type="project" value="UniProtKB"/>
</dbReference>
<dbReference type="GO" id="GO:0030974">
    <property type="term" value="P:thiamine pyrophosphate transmembrane transport"/>
    <property type="evidence" value="ECO:0000250"/>
    <property type="project" value="UniProtKB"/>
</dbReference>
<dbReference type="InterPro" id="IPR007603">
    <property type="entry name" value="Choline_transptr-like"/>
</dbReference>
<dbReference type="PANTHER" id="PTHR12385">
    <property type="entry name" value="CHOLINE TRANSPORTER-LIKE (SLC FAMILY 44)"/>
    <property type="match status" value="1"/>
</dbReference>
<dbReference type="PANTHER" id="PTHR12385:SF37">
    <property type="entry name" value="CHOLINE TRANSPORTER-LIKE PROTEIN 4"/>
    <property type="match status" value="1"/>
</dbReference>
<dbReference type="Pfam" id="PF04515">
    <property type="entry name" value="Choline_transpo"/>
    <property type="match status" value="1"/>
</dbReference>
<gene>
    <name evidence="1" type="primary">SLC44A4</name>
    <name evidence="1" type="synonym">CTL4</name>
    <name evidence="1" type="synonym">TPPT1</name>
</gene>
<comment type="function">
    <text evidence="1 2">Choline transporter that plays a role in the choline-acetylcholine system and is required to the efferent innervation of hair cells in the olivocochlear bundle for the maintenance of physiological function of outer hair cells and the protection of hair cells from acoustic injury (By similarity). Also described as a thiamine pyrophosphate transporter in colon, may mediate the absorption of microbiota-generated thiamine pyrophosphate and contribute to host thiamine (vitamin B1) homeostasis (By similarity).</text>
</comment>
<comment type="catalytic activity">
    <reaction evidence="1">
        <text>choline(out) + n H(+)(in) = choline(in) + n H(+)(out)</text>
        <dbReference type="Rhea" id="RHEA:75463"/>
        <dbReference type="ChEBI" id="CHEBI:15354"/>
        <dbReference type="ChEBI" id="CHEBI:15378"/>
    </reaction>
</comment>
<comment type="catalytic activity">
    <reaction evidence="1">
        <text>thiamine diphosphate(out) = thiamine diphosphate(in)</text>
        <dbReference type="Rhea" id="RHEA:75471"/>
        <dbReference type="ChEBI" id="CHEBI:58937"/>
    </reaction>
</comment>
<comment type="subcellular location">
    <subcellularLocation>
        <location evidence="1">Membrane</location>
        <topology evidence="1">Multi-pass membrane protein</topology>
    </subcellularLocation>
    <subcellularLocation>
        <location evidence="1">Apical cell membrane</location>
    </subcellularLocation>
</comment>
<comment type="PTM">
    <text evidence="1">N-glycosylated; N-glycosylation of Asn-677 and Asn-390 is required for a proper thiamine pyrophosphate uptake.</text>
</comment>
<comment type="similarity">
    <text evidence="4">Belongs to the CTL (choline transporter-like) family.</text>
</comment>
<sequence>MGEKQDPDKAYGKPAKYDPSFRGPIRNRSCTDIICCVLFFVFILGYIAVGLVAWVYGDPQQVLYPRNSSGAYCGIGENKDKPYLLYFNIFSCVLTTNIIAVAQNGLDCPTPQVCVSSCPAVSWTVATNQLSQTVGQVFYAANRSFCLPGVPGDMPVHQSLSQELCPSFLLPSSPALGRCFPWPNSTVPEVPEISNTSISQGISGLLDSLNARDISVKIFEDFAQSWYWILAALGVALVLSLLFVLLLRLVAGPLVFVLIIGVLGVLAYGIYHCWNEYRLLRDKGASISQLGFTTNLSAYSSVQETWLAALILLAVLEGILLLMLIFLRQRIRIAIALLEEASRAVGQMMSTLFYPLVTFVLLLVCIAYWAMTALYLATSGQPQYVLWAPNVSLAGCEKVMMNTSCDPMNQPVNSTCPGLMCVFQGYLSTGLVQRSLFNLQIYGVLGLFWTINWVLALGQCVLAGAFASFYWAFHKPRDIPTFPLSSAFIRTLRYHTGSLAFGALILTLVQIARAILEYIDHKLRGAQNPVARCIMCCFKCCLWCLEKFIKFLNRNAYIMIAIYGKNFCVSAKNAFMLLMRNIVRVVVLDKVTDLLLFFGKLLVVGGVGVLSFFFFTGRIQGLGKDFESPQLNYYWLPIMTSIMGAYVIASGFFSVFGMCVDTLFLCFLEDLERNDGSLDRPYYMSKALLKILGKKNEVPSGDKKRKK</sequence>
<feature type="chain" id="PRO_0000359721" description="Choline transporter-like protein 4">
    <location>
        <begin position="1"/>
        <end position="707"/>
    </location>
</feature>
<feature type="topological domain" description="Cytoplasmic" evidence="3">
    <location>
        <begin position="1"/>
        <end position="32"/>
    </location>
</feature>
<feature type="transmembrane region" description="Helical" evidence="3">
    <location>
        <begin position="33"/>
        <end position="53"/>
    </location>
</feature>
<feature type="topological domain" description="Extracellular" evidence="3">
    <location>
        <begin position="54"/>
        <end position="226"/>
    </location>
</feature>
<feature type="transmembrane region" description="Helical" evidence="3">
    <location>
        <begin position="227"/>
        <end position="247"/>
    </location>
</feature>
<feature type="topological domain" description="Cytoplasmic" evidence="3">
    <location>
        <begin position="248"/>
        <end position="249"/>
    </location>
</feature>
<feature type="transmembrane region" description="Helical" evidence="3">
    <location>
        <begin position="250"/>
        <end position="270"/>
    </location>
</feature>
<feature type="topological domain" description="Extracellular" evidence="3">
    <location>
        <begin position="271"/>
        <end position="306"/>
    </location>
</feature>
<feature type="transmembrane region" description="Helical" evidence="3">
    <location>
        <begin position="307"/>
        <end position="327"/>
    </location>
</feature>
<feature type="topological domain" description="Cytoplasmic" evidence="3">
    <location>
        <begin position="328"/>
        <end position="355"/>
    </location>
</feature>
<feature type="transmembrane region" description="Helical" evidence="3">
    <location>
        <begin position="356"/>
        <end position="376"/>
    </location>
</feature>
<feature type="topological domain" description="Extracellular" evidence="3">
    <location>
        <begin position="377"/>
        <end position="452"/>
    </location>
</feature>
<feature type="transmembrane region" description="Helical" evidence="3">
    <location>
        <begin position="453"/>
        <end position="473"/>
    </location>
</feature>
<feature type="topological domain" description="Cytoplasmic" evidence="3">
    <location>
        <begin position="474"/>
        <end position="498"/>
    </location>
</feature>
<feature type="transmembrane region" description="Helical" evidence="3">
    <location>
        <begin position="499"/>
        <end position="519"/>
    </location>
</feature>
<feature type="topological domain" description="Extracellular" evidence="3">
    <location>
        <begin position="520"/>
        <end position="557"/>
    </location>
</feature>
<feature type="transmembrane region" description="Helical" evidence="3">
    <location>
        <begin position="558"/>
        <end position="578"/>
    </location>
</feature>
<feature type="topological domain" description="Cytoplasmic" evidence="3">
    <location>
        <begin position="579"/>
        <end position="594"/>
    </location>
</feature>
<feature type="transmembrane region" description="Helical" evidence="3">
    <location>
        <begin position="595"/>
        <end position="615"/>
    </location>
</feature>
<feature type="topological domain" description="Extracellular" evidence="3">
    <location>
        <begin position="616"/>
        <end position="635"/>
    </location>
</feature>
<feature type="transmembrane region" description="Helical" evidence="3">
    <location>
        <begin position="636"/>
        <end position="656"/>
    </location>
</feature>
<feature type="topological domain" description="Cytoplasmic" evidence="3">
    <location>
        <begin position="657"/>
        <end position="707"/>
    </location>
</feature>
<feature type="glycosylation site" description="N-linked (GlcNAc...) asparagine" evidence="1">
    <location>
        <position position="67"/>
    </location>
</feature>
<feature type="glycosylation site" description="N-linked (GlcNAc...) asparagine" evidence="3">
    <location>
        <position position="142"/>
    </location>
</feature>
<feature type="glycosylation site" description="N-linked (GlcNAc...) asparagine" evidence="3">
    <location>
        <position position="184"/>
    </location>
</feature>
<feature type="glycosylation site" description="N-linked (GlcNAc...) asparagine" evidence="1">
    <location>
        <position position="195"/>
    </location>
</feature>
<feature type="glycosylation site" description="N-linked (GlcNAc...) asparagine" evidence="3">
    <location>
        <position position="295"/>
    </location>
</feature>
<feature type="glycosylation site" description="N-linked (GlcNAc...) asparagine" evidence="1">
    <location>
        <position position="390"/>
    </location>
</feature>
<feature type="glycosylation site" description="N-linked (GlcNAc...) asparagine" evidence="3">
    <location>
        <position position="402"/>
    </location>
</feature>
<feature type="glycosylation site" description="N-linked (GlcNAc...) asparagine" evidence="1">
    <location>
        <position position="413"/>
    </location>
</feature>
<organism>
    <name type="scientific">Sus scrofa</name>
    <name type="common">Pig</name>
    <dbReference type="NCBI Taxonomy" id="9823"/>
    <lineage>
        <taxon>Eukaryota</taxon>
        <taxon>Metazoa</taxon>
        <taxon>Chordata</taxon>
        <taxon>Craniata</taxon>
        <taxon>Vertebrata</taxon>
        <taxon>Euteleostomi</taxon>
        <taxon>Mammalia</taxon>
        <taxon>Eutheria</taxon>
        <taxon>Laurasiatheria</taxon>
        <taxon>Artiodactyla</taxon>
        <taxon>Suina</taxon>
        <taxon>Suidae</taxon>
        <taxon>Sus</taxon>
    </lineage>
</organism>
<reference key="1">
    <citation type="submission" date="2007-06" db="EMBL/GenBank/DDBJ databases">
        <authorList>
            <consortium name="Porcine genome sequencing project"/>
        </authorList>
    </citation>
    <scope>NUCLEOTIDE SEQUENCE [LARGE SCALE GENOMIC DNA]</scope>
</reference>
<proteinExistence type="inferred from homology"/>
<name>CTL4_PIG</name>
<evidence type="ECO:0000250" key="1">
    <source>
        <dbReference type="UniProtKB" id="Q53GD3"/>
    </source>
</evidence>
<evidence type="ECO:0000250" key="2">
    <source>
        <dbReference type="UniProtKB" id="Q7T2B0"/>
    </source>
</evidence>
<evidence type="ECO:0000255" key="3"/>
<evidence type="ECO:0000305" key="4"/>